<feature type="chain" id="PRO_1000047376" description="Glycine--tRNA ligase">
    <location>
        <begin position="1"/>
        <end position="464"/>
    </location>
</feature>
<feature type="binding site" evidence="1">
    <location>
        <position position="104"/>
    </location>
    <ligand>
        <name>substrate</name>
    </ligand>
</feature>
<feature type="binding site" evidence="1">
    <location>
        <position position="175"/>
    </location>
    <ligand>
        <name>substrate</name>
    </ligand>
</feature>
<feature type="binding site" evidence="1">
    <location>
        <begin position="207"/>
        <end position="209"/>
    </location>
    <ligand>
        <name>ATP</name>
        <dbReference type="ChEBI" id="CHEBI:30616"/>
    </ligand>
</feature>
<feature type="binding site" evidence="1">
    <location>
        <begin position="217"/>
        <end position="222"/>
    </location>
    <ligand>
        <name>ATP</name>
        <dbReference type="ChEBI" id="CHEBI:30616"/>
    </ligand>
</feature>
<feature type="binding site" evidence="1">
    <location>
        <begin position="222"/>
        <end position="226"/>
    </location>
    <ligand>
        <name>substrate</name>
    </ligand>
</feature>
<feature type="binding site" evidence="1">
    <location>
        <begin position="292"/>
        <end position="293"/>
    </location>
    <ligand>
        <name>ATP</name>
        <dbReference type="ChEBI" id="CHEBI:30616"/>
    </ligand>
</feature>
<feature type="binding site" evidence="1">
    <location>
        <begin position="332"/>
        <end position="336"/>
    </location>
    <ligand>
        <name>substrate</name>
    </ligand>
</feature>
<feature type="binding site" evidence="1">
    <location>
        <begin position="336"/>
        <end position="339"/>
    </location>
    <ligand>
        <name>ATP</name>
        <dbReference type="ChEBI" id="CHEBI:30616"/>
    </ligand>
</feature>
<evidence type="ECO:0000255" key="1">
    <source>
        <dbReference type="HAMAP-Rule" id="MF_00253"/>
    </source>
</evidence>
<comment type="function">
    <text evidence="1">Catalyzes the attachment of glycine to tRNA(Gly).</text>
</comment>
<comment type="catalytic activity">
    <reaction evidence="1">
        <text>tRNA(Gly) + glycine + ATP = glycyl-tRNA(Gly) + AMP + diphosphate</text>
        <dbReference type="Rhea" id="RHEA:16013"/>
        <dbReference type="Rhea" id="RHEA-COMP:9664"/>
        <dbReference type="Rhea" id="RHEA-COMP:9683"/>
        <dbReference type="ChEBI" id="CHEBI:30616"/>
        <dbReference type="ChEBI" id="CHEBI:33019"/>
        <dbReference type="ChEBI" id="CHEBI:57305"/>
        <dbReference type="ChEBI" id="CHEBI:78442"/>
        <dbReference type="ChEBI" id="CHEBI:78522"/>
        <dbReference type="ChEBI" id="CHEBI:456215"/>
        <dbReference type="EC" id="6.1.1.14"/>
    </reaction>
</comment>
<comment type="subunit">
    <text evidence="1">Homodimer.</text>
</comment>
<comment type="subcellular location">
    <subcellularLocation>
        <location evidence="1">Cytoplasm</location>
    </subcellularLocation>
</comment>
<comment type="similarity">
    <text evidence="1">Belongs to the class-II aminoacyl-tRNA synthetase family.</text>
</comment>
<name>SYG_LEPBL</name>
<protein>
    <recommendedName>
        <fullName evidence="1">Glycine--tRNA ligase</fullName>
        <ecNumber evidence="1">6.1.1.14</ecNumber>
    </recommendedName>
    <alternativeName>
        <fullName evidence="1">Glycyl-tRNA synthetase</fullName>
        <shortName evidence="1">GlyRS</shortName>
    </alternativeName>
</protein>
<proteinExistence type="inferred from homology"/>
<accession>Q04Z62</accession>
<gene>
    <name evidence="1" type="primary">glyQS</name>
    <name type="ordered locus">LBL_2227</name>
</gene>
<sequence>MEKKESLDSSLKEIVSVCKRRGFVYPGSEIYGGLSNTFDYGPYGVELLQNLKQLWWKFFVHLREDVVGLDSSILLNPKVWEASGHVSNFTDPLIDCKNCKTRIRADKFLEDQKGEGFATGLTLEKMNQVIKENNFSCPNCGQRGTFTEARDFNLMFKTSHGASAEDSLDIYLRPETAQGIFLNFKNVVSTTRRKIPFGIAQIGKSFRNEIMARQFVFRTREFEQMEMEFFCEPGTQKEWFSHWVNYCMNWLTEQVGVKKENLRIREHEKEELSFYSEGTSDIEFKYNFGWGELWGIASRTDYDLNQHQKFSGEDLKYQDQVQNKKYVPFVVEPALGVNRLFLAVVTDAYQEEKLPDGEIRTVLRFSPKIAPVKVAVFPLMKKDGLLEKSREIFADLSKLGNIEYDDSGAIGKRYRRQDEIGTPFCITVDYDTLKDDTVTVRERDSMAQERVSVTRLRNWLFERL</sequence>
<dbReference type="EC" id="6.1.1.14" evidence="1"/>
<dbReference type="EMBL" id="CP000348">
    <property type="protein sequence ID" value="ABJ79633.1"/>
    <property type="molecule type" value="Genomic_DNA"/>
</dbReference>
<dbReference type="RefSeq" id="WP_011670654.1">
    <property type="nucleotide sequence ID" value="NC_008508.1"/>
</dbReference>
<dbReference type="SMR" id="Q04Z62"/>
<dbReference type="KEGG" id="lbl:LBL_2227"/>
<dbReference type="HOGENOM" id="CLU_015515_2_1_12"/>
<dbReference type="GO" id="GO:0005737">
    <property type="term" value="C:cytoplasm"/>
    <property type="evidence" value="ECO:0007669"/>
    <property type="project" value="UniProtKB-SubCell"/>
</dbReference>
<dbReference type="GO" id="GO:0005524">
    <property type="term" value="F:ATP binding"/>
    <property type="evidence" value="ECO:0007669"/>
    <property type="project" value="UniProtKB-UniRule"/>
</dbReference>
<dbReference type="GO" id="GO:0004820">
    <property type="term" value="F:glycine-tRNA ligase activity"/>
    <property type="evidence" value="ECO:0000250"/>
    <property type="project" value="UniProtKB"/>
</dbReference>
<dbReference type="GO" id="GO:0046983">
    <property type="term" value="F:protein dimerization activity"/>
    <property type="evidence" value="ECO:0000250"/>
    <property type="project" value="UniProtKB"/>
</dbReference>
<dbReference type="GO" id="GO:0006426">
    <property type="term" value="P:glycyl-tRNA aminoacylation"/>
    <property type="evidence" value="ECO:0007669"/>
    <property type="project" value="UniProtKB-UniRule"/>
</dbReference>
<dbReference type="CDD" id="cd00774">
    <property type="entry name" value="GlyRS-like_core"/>
    <property type="match status" value="1"/>
</dbReference>
<dbReference type="CDD" id="cd00858">
    <property type="entry name" value="GlyRS_anticodon"/>
    <property type="match status" value="1"/>
</dbReference>
<dbReference type="FunFam" id="3.40.50.800:FF:000002">
    <property type="entry name" value="Glycine--tRNA ligase"/>
    <property type="match status" value="1"/>
</dbReference>
<dbReference type="Gene3D" id="3.40.50.800">
    <property type="entry name" value="Anticodon-binding domain"/>
    <property type="match status" value="1"/>
</dbReference>
<dbReference type="Gene3D" id="3.30.930.10">
    <property type="entry name" value="Bira Bifunctional Protein, Domain 2"/>
    <property type="match status" value="1"/>
</dbReference>
<dbReference type="HAMAP" id="MF_00253_B">
    <property type="entry name" value="Gly_tRNA_synth_B"/>
    <property type="match status" value="1"/>
</dbReference>
<dbReference type="InterPro" id="IPR002314">
    <property type="entry name" value="aa-tRNA-synt_IIb"/>
</dbReference>
<dbReference type="InterPro" id="IPR006195">
    <property type="entry name" value="aa-tRNA-synth_II"/>
</dbReference>
<dbReference type="InterPro" id="IPR045864">
    <property type="entry name" value="aa-tRNA-synth_II/BPL/LPL"/>
</dbReference>
<dbReference type="InterPro" id="IPR004154">
    <property type="entry name" value="Anticodon-bd"/>
</dbReference>
<dbReference type="InterPro" id="IPR036621">
    <property type="entry name" value="Anticodon-bd_dom_sf"/>
</dbReference>
<dbReference type="InterPro" id="IPR027031">
    <property type="entry name" value="Gly-tRNA_synthase/POLG2"/>
</dbReference>
<dbReference type="InterPro" id="IPR022961">
    <property type="entry name" value="Gly_tRNA_ligase_bac"/>
</dbReference>
<dbReference type="InterPro" id="IPR033731">
    <property type="entry name" value="GlyRS-like_core"/>
</dbReference>
<dbReference type="InterPro" id="IPR002315">
    <property type="entry name" value="tRNA-synt_gly"/>
</dbReference>
<dbReference type="NCBIfam" id="TIGR00389">
    <property type="entry name" value="glyS_dimeric"/>
    <property type="match status" value="1"/>
</dbReference>
<dbReference type="NCBIfam" id="NF003211">
    <property type="entry name" value="PRK04173.1"/>
    <property type="match status" value="1"/>
</dbReference>
<dbReference type="PANTHER" id="PTHR10745:SF8">
    <property type="entry name" value="DNA POLYMERASE SUBUNIT GAMMA-2, MITOCHONDRIAL"/>
    <property type="match status" value="1"/>
</dbReference>
<dbReference type="PANTHER" id="PTHR10745">
    <property type="entry name" value="GLYCYL-TRNA SYNTHETASE/DNA POLYMERASE SUBUNIT GAMMA-2"/>
    <property type="match status" value="1"/>
</dbReference>
<dbReference type="Pfam" id="PF03129">
    <property type="entry name" value="HGTP_anticodon"/>
    <property type="match status" value="1"/>
</dbReference>
<dbReference type="Pfam" id="PF00587">
    <property type="entry name" value="tRNA-synt_2b"/>
    <property type="match status" value="1"/>
</dbReference>
<dbReference type="PRINTS" id="PR01043">
    <property type="entry name" value="TRNASYNTHGLY"/>
</dbReference>
<dbReference type="SUPFAM" id="SSF52954">
    <property type="entry name" value="Class II aaRS ABD-related"/>
    <property type="match status" value="1"/>
</dbReference>
<dbReference type="SUPFAM" id="SSF55681">
    <property type="entry name" value="Class II aaRS and biotin synthetases"/>
    <property type="match status" value="1"/>
</dbReference>
<dbReference type="PROSITE" id="PS50862">
    <property type="entry name" value="AA_TRNA_LIGASE_II"/>
    <property type="match status" value="1"/>
</dbReference>
<keyword id="KW-0030">Aminoacyl-tRNA synthetase</keyword>
<keyword id="KW-0067">ATP-binding</keyword>
<keyword id="KW-0963">Cytoplasm</keyword>
<keyword id="KW-0436">Ligase</keyword>
<keyword id="KW-0547">Nucleotide-binding</keyword>
<keyword id="KW-0648">Protein biosynthesis</keyword>
<reference key="1">
    <citation type="journal article" date="2006" name="Proc. Natl. Acad. Sci. U.S.A.">
        <title>Genome reduction in Leptospira borgpetersenii reflects limited transmission potential.</title>
        <authorList>
            <person name="Bulach D.M."/>
            <person name="Zuerner R.L."/>
            <person name="Wilson P."/>
            <person name="Seemann T."/>
            <person name="McGrath A."/>
            <person name="Cullen P.A."/>
            <person name="Davis J."/>
            <person name="Johnson M."/>
            <person name="Kuczek E."/>
            <person name="Alt D.P."/>
            <person name="Peterson-Burch B."/>
            <person name="Coppel R.L."/>
            <person name="Rood J.I."/>
            <person name="Davies J.K."/>
            <person name="Adler B."/>
        </authorList>
    </citation>
    <scope>NUCLEOTIDE SEQUENCE [LARGE SCALE GENOMIC DNA]</scope>
    <source>
        <strain>L550</strain>
    </source>
</reference>
<organism>
    <name type="scientific">Leptospira borgpetersenii serovar Hardjo-bovis (strain L550)</name>
    <dbReference type="NCBI Taxonomy" id="355276"/>
    <lineage>
        <taxon>Bacteria</taxon>
        <taxon>Pseudomonadati</taxon>
        <taxon>Spirochaetota</taxon>
        <taxon>Spirochaetia</taxon>
        <taxon>Leptospirales</taxon>
        <taxon>Leptospiraceae</taxon>
        <taxon>Leptospira</taxon>
    </lineage>
</organism>